<proteinExistence type="evidence at protein level"/>
<gene>
    <name type="primary">cycF</name>
</gene>
<name>C554_CERSP</name>
<dbReference type="SMR" id="P0C0X7"/>
<dbReference type="GO" id="GO:0042597">
    <property type="term" value="C:periplasmic space"/>
    <property type="evidence" value="ECO:0007669"/>
    <property type="project" value="UniProtKB-SubCell"/>
</dbReference>
<dbReference type="GO" id="GO:0009055">
    <property type="term" value="F:electron transfer activity"/>
    <property type="evidence" value="ECO:0007669"/>
    <property type="project" value="InterPro"/>
</dbReference>
<dbReference type="GO" id="GO:0020037">
    <property type="term" value="F:heme binding"/>
    <property type="evidence" value="ECO:0007669"/>
    <property type="project" value="InterPro"/>
</dbReference>
<dbReference type="GO" id="GO:0005506">
    <property type="term" value="F:iron ion binding"/>
    <property type="evidence" value="ECO:0007669"/>
    <property type="project" value="InterPro"/>
</dbReference>
<dbReference type="GO" id="GO:0022900">
    <property type="term" value="P:electron transport chain"/>
    <property type="evidence" value="ECO:0007669"/>
    <property type="project" value="InterPro"/>
</dbReference>
<dbReference type="Gene3D" id="1.20.120.10">
    <property type="entry name" value="Cytochrome c/b562"/>
    <property type="match status" value="1"/>
</dbReference>
<dbReference type="InterPro" id="IPR010980">
    <property type="entry name" value="Cyt_c/b562"/>
</dbReference>
<dbReference type="InterPro" id="IPR002321">
    <property type="entry name" value="Cyt_c_II"/>
</dbReference>
<dbReference type="InterPro" id="IPR012127">
    <property type="entry name" value="Cyt_c_prime"/>
</dbReference>
<dbReference type="InterPro" id="IPR015984">
    <property type="entry name" value="Cyt_c_prime_subgr"/>
</dbReference>
<dbReference type="Pfam" id="PF01322">
    <property type="entry name" value="Cytochrom_C_2"/>
    <property type="match status" value="1"/>
</dbReference>
<dbReference type="PIRSF" id="PIRSF000027">
    <property type="entry name" value="Cytc_c_prime"/>
    <property type="match status" value="1"/>
</dbReference>
<dbReference type="PRINTS" id="PR00608">
    <property type="entry name" value="CYTCHROMECII"/>
</dbReference>
<dbReference type="SUPFAM" id="SSF47175">
    <property type="entry name" value="Cytochromes"/>
    <property type="match status" value="1"/>
</dbReference>
<dbReference type="PROSITE" id="PS51009">
    <property type="entry name" value="CYTCII"/>
    <property type="match status" value="1"/>
</dbReference>
<reference key="1">
    <citation type="journal article" date="1989" name="Arch. Biochem. Biophys.">
        <title>Effect of aerobic growth conditions on the soluble cytochrome content of the purple phototrophic bacterium Rhodobacter sphaeroides: induction of cytochrome c554.</title>
        <authorList>
            <person name="Bartsch R.G."/>
            <person name="Ambler R.P."/>
            <person name="Meyer T.E."/>
            <person name="Cusanovich M.A."/>
        </authorList>
    </citation>
    <scope>PROTEIN SEQUENCE</scope>
    <scope>PYROGLUTAMATE FORMATION AT GLN-1</scope>
    <source>
        <strain>MRE</strain>
    </source>
</reference>
<organism>
    <name type="scientific">Cereibacter sphaeroides</name>
    <name type="common">Rhodobacter sphaeroides</name>
    <dbReference type="NCBI Taxonomy" id="1063"/>
    <lineage>
        <taxon>Bacteria</taxon>
        <taxon>Pseudomonadati</taxon>
        <taxon>Pseudomonadota</taxon>
        <taxon>Alphaproteobacteria</taxon>
        <taxon>Rhodobacterales</taxon>
        <taxon>Paracoccaceae</taxon>
        <taxon>Cereibacter</taxon>
    </lineage>
</organism>
<accession>P0C0X7</accession>
<accession>Q53142</accession>
<protein>
    <recommendedName>
        <fullName>Cytochrome c-554</fullName>
    </recommendedName>
    <alternativeName>
        <fullName>Cytochrome c554</fullName>
    </alternativeName>
    <alternativeName>
        <fullName>High-potential cytochrome c</fullName>
    </alternativeName>
</protein>
<keyword id="KW-0903">Direct protein sequencing</keyword>
<keyword id="KW-0249">Electron transport</keyword>
<keyword id="KW-0349">Heme</keyword>
<keyword id="KW-0408">Iron</keyword>
<keyword id="KW-0479">Metal-binding</keyword>
<keyword id="KW-0574">Periplasm</keyword>
<keyword id="KW-0873">Pyrrolidone carboxylic acid</keyword>
<keyword id="KW-0813">Transport</keyword>
<evidence type="ECO:0000250" key="1">
    <source>
        <dbReference type="UniProtKB" id="P00150"/>
    </source>
</evidence>
<evidence type="ECO:0000305" key="2">
    <source>
    </source>
</evidence>
<feature type="chain" id="PRO_0000108406" description="Cytochrome c-554">
    <location>
        <begin position="1"/>
        <end position="133"/>
    </location>
</feature>
<feature type="binding site" description="axial binding residue" evidence="1">
    <location>
        <position position="17"/>
    </location>
    <ligand>
        <name>heme c</name>
        <dbReference type="ChEBI" id="CHEBI:61717"/>
    </ligand>
    <ligandPart>
        <name>Fe</name>
        <dbReference type="ChEBI" id="CHEBI:18248"/>
    </ligandPart>
</feature>
<feature type="binding site" description="covalent" evidence="1">
    <location>
        <position position="122"/>
    </location>
    <ligand>
        <name>heme c</name>
        <dbReference type="ChEBI" id="CHEBI:61717"/>
    </ligand>
</feature>
<feature type="binding site" description="covalent" evidence="1">
    <location>
        <position position="125"/>
    </location>
    <ligand>
        <name>heme c</name>
        <dbReference type="ChEBI" id="CHEBI:61717"/>
    </ligand>
</feature>
<feature type="binding site" description="axial binding residue" evidence="1">
    <location>
        <position position="126"/>
    </location>
    <ligand>
        <name>heme c</name>
        <dbReference type="ChEBI" id="CHEBI:61717"/>
    </ligand>
    <ligandPart>
        <name>Fe</name>
        <dbReference type="ChEBI" id="CHEBI:18248"/>
    </ligandPart>
</feature>
<feature type="modified residue" description="Pyrrolidone carboxylic acid" evidence="2">
    <location>
        <position position="1"/>
    </location>
</feature>
<comment type="function">
    <text>Monoheme c-type cytochrome, that is particularly expressed when cells generate energy via aerobic respiration.</text>
</comment>
<comment type="subcellular location">
    <subcellularLocation>
        <location>Periplasm</location>
    </subcellularLocation>
</comment>
<comment type="PTM">
    <text evidence="1">Binds 1 heme c group covalently per subunit.</text>
</comment>
<sequence length="133" mass="14065">QDARQIERMIEGRHGLMTLMAYELGKLGGMAKEETPYDAEVAGDAASNLSALASVLSPELFPKGSAVGEAEDSEALPAIWEKPDDFAQKISDMEEAAAKMQAAAGTDLASLQGAMRDLGAGCGSCHETYRQKD</sequence>